<comment type="function">
    <text evidence="7">Mitochondrial acetyl-CoA acetyltransferase that catalyzes both the formation and degradation of acetoacetyl-CoA (PubMed:32005728). Has no overlapping function with erg10B and seems not to be involved in ergosterol biosynthesis (PubMed:32005728). Plays an important role in growth, morphogenesis and maintaining mitochondrial function including the response to oxidative stresses (PubMed:32005728).</text>
</comment>
<comment type="catalytic activity">
    <reaction evidence="6 7">
        <text>2 acetyl-CoA = acetoacetyl-CoA + CoA</text>
        <dbReference type="Rhea" id="RHEA:21036"/>
        <dbReference type="ChEBI" id="CHEBI:57286"/>
        <dbReference type="ChEBI" id="CHEBI:57287"/>
        <dbReference type="ChEBI" id="CHEBI:57288"/>
        <dbReference type="EC" id="2.3.1.9"/>
    </reaction>
    <physiologicalReaction direction="left-to-right" evidence="7">
        <dbReference type="Rhea" id="RHEA:21037"/>
    </physiologicalReaction>
    <physiologicalReaction direction="right-to-left" evidence="7">
        <dbReference type="Rhea" id="RHEA:21038"/>
    </physiologicalReaction>
</comment>
<comment type="cofactor">
    <cofactor evidence="4">
        <name>K(+)</name>
        <dbReference type="ChEBI" id="CHEBI:29103"/>
    </cofactor>
</comment>
<comment type="biophysicochemical properties">
    <kinetics>
        <KM evidence="7">26 uM for CoA</KM>
        <KM evidence="7">43 uM for acetoacetyl-CoA</KM>
        <KM evidence="7">232 uM for acetyl-CoA</KM>
    </kinetics>
</comment>
<comment type="pathway">
    <text evidence="7">Metabolic intermediate biosynthesis; (R)-mevalonate biosynthesis; (R)-mevalonate from acetyl-CoA: step 1/3.</text>
</comment>
<comment type="subunit">
    <text evidence="3">Homotetramer.</text>
</comment>
<comment type="subcellular location">
    <subcellularLocation>
        <location evidence="7">Mitochondrion</location>
    </subcellularLocation>
</comment>
<comment type="disruption phenotype">
    <text evidence="7">Leads to lethality.</text>
</comment>
<comment type="biotechnology">
    <text evidence="10">Mitochondrial erg10A is essential for A.fumigatus cell viability and might be a potential drug target to feed the antifungal drug development pipeline.</text>
</comment>
<comment type="miscellaneous">
    <text evidence="4">Even though it is not involved in catalysis directly, the Cl(-) anion stabilizes the catalytic site via both direct and water-mediated hydrogen bonds to catalytic residues and residues adjacent.</text>
</comment>
<comment type="similarity">
    <text evidence="9">Belongs to the thiolase-like superfamily. Thiolase family.</text>
</comment>
<protein>
    <recommendedName>
        <fullName evidence="8">Acetyl-CoA acetyltransferase erg10A, mitochondrial</fullName>
        <ecNumber evidence="7">2.3.1.9</ecNumber>
    </recommendedName>
    <alternativeName>
        <fullName evidence="8">Acetoacetyl-CoA thiolase erg10A</fullName>
    </alternativeName>
    <alternativeName>
        <fullName evidence="8">Ergosterol biosynthesis protein 10A</fullName>
    </alternativeName>
</protein>
<name>ER10A_ASPFU</name>
<sequence length="433" mass="45710">MAIQTTTGLAARLVAKRATFPASRRNFSASRSALKEIQEAYILSGARTPTAKFNGSFVSVSAPELGAVAIKSAVSKSGVPVEKITDVYMGNVLQGAVGQAPARQASMFAGLSPTVESMTVNKVCASGLKAVALAAQNIQLGLAEAQVAGGMENMSRVPYYLPRSTQLPPFGEIKLQDGLIQDGLWDVYNQFHMGICAEKTAKKYEISREEQDQYAIQSYQRAQAAWKENKFAEEIAPVTVKGKKGETVVERDEGYENLRIDKMATLKPAFLRDGTGTVTAGNASTMNDGASALVLGSKAIAREFAQGNRALARIVSTADAAIDPVDFPVAPAKAVPIALERAGITKDQVAVWEFNEAFAAVIKANEKILGLQNARVNPLGGAISLGHALGSSGSRILVTLLHQLQPGEYGVAAICNGGGAATAMVVQKLDRVD</sequence>
<evidence type="ECO:0000250" key="1">
    <source>
        <dbReference type="UniProtKB" id="B0XMC1"/>
    </source>
</evidence>
<evidence type="ECO:0000250" key="2">
    <source>
        <dbReference type="UniProtKB" id="P24752"/>
    </source>
</evidence>
<evidence type="ECO:0000250" key="3">
    <source>
        <dbReference type="UniProtKB" id="P41338"/>
    </source>
</evidence>
<evidence type="ECO:0000250" key="4">
    <source>
        <dbReference type="UniProtKB" id="Q4WCL5"/>
    </source>
</evidence>
<evidence type="ECO:0000255" key="5"/>
<evidence type="ECO:0000255" key="6">
    <source>
        <dbReference type="PROSITE-ProRule" id="PRU10020"/>
    </source>
</evidence>
<evidence type="ECO:0000269" key="7">
    <source>
    </source>
</evidence>
<evidence type="ECO:0000303" key="8">
    <source>
    </source>
</evidence>
<evidence type="ECO:0000305" key="9"/>
<evidence type="ECO:0000305" key="10">
    <source>
    </source>
</evidence>
<proteinExistence type="evidence at protein level"/>
<keyword id="KW-0012">Acyltransferase</keyword>
<keyword id="KW-0479">Metal-binding</keyword>
<keyword id="KW-0496">Mitochondrion</keyword>
<keyword id="KW-0630">Potassium</keyword>
<keyword id="KW-1185">Reference proteome</keyword>
<keyword id="KW-0808">Transferase</keyword>
<keyword id="KW-0809">Transit peptide</keyword>
<dbReference type="EC" id="2.3.1.9" evidence="7"/>
<dbReference type="EMBL" id="AAHF01000006">
    <property type="protein sequence ID" value="EAL89256.1"/>
    <property type="molecule type" value="Genomic_DNA"/>
</dbReference>
<dbReference type="RefSeq" id="XP_751294.1">
    <property type="nucleotide sequence ID" value="XM_746201.1"/>
</dbReference>
<dbReference type="SMR" id="Q4WLA8"/>
<dbReference type="STRING" id="330879.Q4WLA8"/>
<dbReference type="EnsemblFungi" id="EAL89256">
    <property type="protein sequence ID" value="EAL89256"/>
    <property type="gene ID" value="AFUA_6G14200"/>
</dbReference>
<dbReference type="GeneID" id="3508611"/>
<dbReference type="KEGG" id="afm:AFUA_6G14200"/>
<dbReference type="VEuPathDB" id="FungiDB:Afu6g14200"/>
<dbReference type="eggNOG" id="KOG1390">
    <property type="taxonomic scope" value="Eukaryota"/>
</dbReference>
<dbReference type="HOGENOM" id="CLU_031026_0_1_1"/>
<dbReference type="InParanoid" id="Q4WLA8"/>
<dbReference type="OMA" id="SMGTFGE"/>
<dbReference type="OrthoDB" id="5404651at2759"/>
<dbReference type="UniPathway" id="UPA00058">
    <property type="reaction ID" value="UER00101"/>
</dbReference>
<dbReference type="Proteomes" id="UP000002530">
    <property type="component" value="Chromosome 6"/>
</dbReference>
<dbReference type="GO" id="GO:0005739">
    <property type="term" value="C:mitochondrion"/>
    <property type="evidence" value="ECO:0000318"/>
    <property type="project" value="GO_Central"/>
</dbReference>
<dbReference type="GO" id="GO:0003985">
    <property type="term" value="F:acetyl-CoA C-acetyltransferase activity"/>
    <property type="evidence" value="ECO:0000318"/>
    <property type="project" value="GO_Central"/>
</dbReference>
<dbReference type="GO" id="GO:0046872">
    <property type="term" value="F:metal ion binding"/>
    <property type="evidence" value="ECO:0007669"/>
    <property type="project" value="UniProtKB-KW"/>
</dbReference>
<dbReference type="CDD" id="cd00751">
    <property type="entry name" value="thiolase"/>
    <property type="match status" value="1"/>
</dbReference>
<dbReference type="FunFam" id="3.40.47.10:FF:000007">
    <property type="entry name" value="acetyl-CoA acetyltransferase, mitochondrial"/>
    <property type="match status" value="1"/>
</dbReference>
<dbReference type="Gene3D" id="3.40.47.10">
    <property type="match status" value="1"/>
</dbReference>
<dbReference type="InterPro" id="IPR002155">
    <property type="entry name" value="Thiolase"/>
</dbReference>
<dbReference type="InterPro" id="IPR016039">
    <property type="entry name" value="Thiolase-like"/>
</dbReference>
<dbReference type="InterPro" id="IPR020615">
    <property type="entry name" value="Thiolase_acyl_enz_int_AS"/>
</dbReference>
<dbReference type="InterPro" id="IPR020610">
    <property type="entry name" value="Thiolase_AS"/>
</dbReference>
<dbReference type="InterPro" id="IPR020617">
    <property type="entry name" value="Thiolase_C"/>
</dbReference>
<dbReference type="InterPro" id="IPR020616">
    <property type="entry name" value="Thiolase_N"/>
</dbReference>
<dbReference type="NCBIfam" id="TIGR01930">
    <property type="entry name" value="AcCoA-C-Actrans"/>
    <property type="match status" value="1"/>
</dbReference>
<dbReference type="PANTHER" id="PTHR18919:SF156">
    <property type="entry name" value="ACETYL-COA ACETYLTRANSFERASE, MITOCHONDRIAL"/>
    <property type="match status" value="1"/>
</dbReference>
<dbReference type="PANTHER" id="PTHR18919">
    <property type="entry name" value="ACETYL-COA C-ACYLTRANSFERASE"/>
    <property type="match status" value="1"/>
</dbReference>
<dbReference type="Pfam" id="PF02803">
    <property type="entry name" value="Thiolase_C"/>
    <property type="match status" value="1"/>
</dbReference>
<dbReference type="Pfam" id="PF00108">
    <property type="entry name" value="Thiolase_N"/>
    <property type="match status" value="1"/>
</dbReference>
<dbReference type="PIRSF" id="PIRSF000429">
    <property type="entry name" value="Ac-CoA_Ac_transf"/>
    <property type="match status" value="1"/>
</dbReference>
<dbReference type="SUPFAM" id="SSF53901">
    <property type="entry name" value="Thiolase-like"/>
    <property type="match status" value="2"/>
</dbReference>
<dbReference type="PROSITE" id="PS00098">
    <property type="entry name" value="THIOLASE_1"/>
    <property type="match status" value="1"/>
</dbReference>
<dbReference type="PROSITE" id="PS00099">
    <property type="entry name" value="THIOLASE_3"/>
    <property type="match status" value="1"/>
</dbReference>
<reference key="1">
    <citation type="journal article" date="2005" name="Nature">
        <title>Genomic sequence of the pathogenic and allergenic filamentous fungus Aspergillus fumigatus.</title>
        <authorList>
            <person name="Nierman W.C."/>
            <person name="Pain A."/>
            <person name="Anderson M.J."/>
            <person name="Wortman J.R."/>
            <person name="Kim H.S."/>
            <person name="Arroyo J."/>
            <person name="Berriman M."/>
            <person name="Abe K."/>
            <person name="Archer D.B."/>
            <person name="Bermejo C."/>
            <person name="Bennett J.W."/>
            <person name="Bowyer P."/>
            <person name="Chen D."/>
            <person name="Collins M."/>
            <person name="Coulsen R."/>
            <person name="Davies R."/>
            <person name="Dyer P.S."/>
            <person name="Farman M.L."/>
            <person name="Fedorova N."/>
            <person name="Fedorova N.D."/>
            <person name="Feldblyum T.V."/>
            <person name="Fischer R."/>
            <person name="Fosker N."/>
            <person name="Fraser A."/>
            <person name="Garcia J.L."/>
            <person name="Garcia M.J."/>
            <person name="Goble A."/>
            <person name="Goldman G.H."/>
            <person name="Gomi K."/>
            <person name="Griffith-Jones S."/>
            <person name="Gwilliam R."/>
            <person name="Haas B.J."/>
            <person name="Haas H."/>
            <person name="Harris D.E."/>
            <person name="Horiuchi H."/>
            <person name="Huang J."/>
            <person name="Humphray S."/>
            <person name="Jimenez J."/>
            <person name="Keller N."/>
            <person name="Khouri H."/>
            <person name="Kitamoto K."/>
            <person name="Kobayashi T."/>
            <person name="Konzack S."/>
            <person name="Kulkarni R."/>
            <person name="Kumagai T."/>
            <person name="Lafton A."/>
            <person name="Latge J.-P."/>
            <person name="Li W."/>
            <person name="Lord A."/>
            <person name="Lu C."/>
            <person name="Majoros W.H."/>
            <person name="May G.S."/>
            <person name="Miller B.L."/>
            <person name="Mohamoud Y."/>
            <person name="Molina M."/>
            <person name="Monod M."/>
            <person name="Mouyna I."/>
            <person name="Mulligan S."/>
            <person name="Murphy L.D."/>
            <person name="O'Neil S."/>
            <person name="Paulsen I."/>
            <person name="Penalva M.A."/>
            <person name="Pertea M."/>
            <person name="Price C."/>
            <person name="Pritchard B.L."/>
            <person name="Quail M.A."/>
            <person name="Rabbinowitsch E."/>
            <person name="Rawlins N."/>
            <person name="Rajandream M.A."/>
            <person name="Reichard U."/>
            <person name="Renauld H."/>
            <person name="Robson G.D."/>
            <person name="Rodriguez de Cordoba S."/>
            <person name="Rodriguez-Pena J.M."/>
            <person name="Ronning C.M."/>
            <person name="Rutter S."/>
            <person name="Salzberg S.L."/>
            <person name="Sanchez M."/>
            <person name="Sanchez-Ferrero J.C."/>
            <person name="Saunders D."/>
            <person name="Seeger K."/>
            <person name="Squares R."/>
            <person name="Squares S."/>
            <person name="Takeuchi M."/>
            <person name="Tekaia F."/>
            <person name="Turner G."/>
            <person name="Vazquez de Aldana C.R."/>
            <person name="Weidman J."/>
            <person name="White O."/>
            <person name="Woodward J.R."/>
            <person name="Yu J.-H."/>
            <person name="Fraser C.M."/>
            <person name="Galagan J.E."/>
            <person name="Asai K."/>
            <person name="Machida M."/>
            <person name="Hall N."/>
            <person name="Barrell B.G."/>
            <person name="Denning D.W."/>
        </authorList>
    </citation>
    <scope>NUCLEOTIDE SEQUENCE [LARGE SCALE GENOMIC DNA]</scope>
    <source>
        <strain>ATCC MYA-4609 / CBS 101355 / FGSC A1100 / Af293</strain>
    </source>
</reference>
<reference key="2">
    <citation type="journal article" date="2020" name="Appl. Environ. Microbiol.">
        <title>Characterization of Aspergillus fumigatus mitochondrial acetyl-CoA acetyltransferase as an antifungal target.</title>
        <authorList>
            <person name="Zhang Y."/>
            <person name="Wei W."/>
            <person name="Fan J."/>
            <person name="Jin C."/>
            <person name="Lu L."/>
            <person name="Fang W."/>
        </authorList>
    </citation>
    <scope>FUNCTION</scope>
    <scope>CATALYTIC ACTIVITY</scope>
    <scope>BIOPHYSICOCHEMICAL PROPERTIES</scope>
    <scope>SUBCELLULAR LOCATION</scope>
    <scope>DISRUPTION PHENOTYPE</scope>
    <scope>BIOTECHNOLOGY</scope>
    <scope>PATHWAY</scope>
</reference>
<accession>Q4WLA8</accession>
<gene>
    <name evidence="8" type="primary">erg10A</name>
    <name type="ORF">AFUA_6G14200</name>
</gene>
<organism>
    <name type="scientific">Aspergillus fumigatus (strain ATCC MYA-4609 / CBS 101355 / FGSC A1100 / Af293)</name>
    <name type="common">Neosartorya fumigata</name>
    <dbReference type="NCBI Taxonomy" id="330879"/>
    <lineage>
        <taxon>Eukaryota</taxon>
        <taxon>Fungi</taxon>
        <taxon>Dikarya</taxon>
        <taxon>Ascomycota</taxon>
        <taxon>Pezizomycotina</taxon>
        <taxon>Eurotiomycetes</taxon>
        <taxon>Eurotiomycetidae</taxon>
        <taxon>Eurotiales</taxon>
        <taxon>Aspergillaceae</taxon>
        <taxon>Aspergillus</taxon>
        <taxon>Aspergillus subgen. Fumigati</taxon>
    </lineage>
</organism>
<feature type="transit peptide" description="Mitochondrion" evidence="5">
    <location>
        <begin position="1"/>
        <end position="34"/>
    </location>
</feature>
<feature type="chain" id="PRO_0000454144" description="Acetyl-CoA acetyltransferase erg10A, mitochondrial" evidence="5">
    <location>
        <begin position="35"/>
        <end position="433"/>
    </location>
</feature>
<feature type="active site" description="Acyl-thioester intermediate" evidence="2">
    <location>
        <position position="124"/>
    </location>
</feature>
<feature type="active site" description="Proton acceptor" evidence="6">
    <location>
        <position position="387"/>
    </location>
</feature>
<feature type="active site" description="Proton acceptor" evidence="6">
    <location>
        <position position="415"/>
    </location>
</feature>
<feature type="binding site" evidence="4">
    <location>
        <position position="219"/>
    </location>
    <ligand>
        <name>K(+)</name>
        <dbReference type="ChEBI" id="CHEBI:29103"/>
    </ligand>
</feature>
<feature type="binding site" evidence="1">
    <location>
        <position position="229"/>
    </location>
    <ligand>
        <name>CoA</name>
        <dbReference type="ChEBI" id="CHEBI:57287"/>
    </ligand>
</feature>
<feature type="binding site" evidence="4">
    <location>
        <position position="262"/>
    </location>
    <ligand>
        <name>CoA</name>
        <dbReference type="ChEBI" id="CHEBI:57287"/>
    </ligand>
</feature>
<feature type="binding site" evidence="4">
    <location>
        <position position="280"/>
    </location>
    <ligand>
        <name>K(+)</name>
        <dbReference type="ChEBI" id="CHEBI:29103"/>
    </ligand>
</feature>
<feature type="binding site" evidence="4">
    <location>
        <position position="284"/>
    </location>
    <ligand>
        <name>CoA</name>
        <dbReference type="ChEBI" id="CHEBI:57287"/>
    </ligand>
</feature>
<feature type="binding site" evidence="4">
    <location>
        <position position="416"/>
    </location>
    <ligand>
        <name>chloride</name>
        <dbReference type="ChEBI" id="CHEBI:17996"/>
    </ligand>
</feature>